<comment type="function">
    <text>Cytochromes P450 are a group of heme-thiolate monooxygenases. They oxidize a variety of structurally unrelated compounds, including steroids, fatty acids, and xenobiotics.</text>
</comment>
<comment type="cofactor">
    <cofactor evidence="1">
        <name>heme</name>
        <dbReference type="ChEBI" id="CHEBI:30413"/>
    </cofactor>
</comment>
<comment type="similarity">
    <text evidence="3">Belongs to the cytochrome P450 family.</text>
</comment>
<dbReference type="EC" id="1.14.-.-"/>
<dbReference type="EMBL" id="FO080583">
    <property type="protein sequence ID" value="CCD64858.1"/>
    <property type="molecule type" value="Genomic_DNA"/>
</dbReference>
<dbReference type="RefSeq" id="NP_495052.1">
    <property type="nucleotide sequence ID" value="NM_062651.7"/>
</dbReference>
<dbReference type="SMR" id="Q09660"/>
<dbReference type="BioGRID" id="39278">
    <property type="interactions" value="1"/>
</dbReference>
<dbReference type="FunCoup" id="Q09660">
    <property type="interactions" value="48"/>
</dbReference>
<dbReference type="STRING" id="6239.ZK177.5.2"/>
<dbReference type="PaxDb" id="6239-ZK177.5.2"/>
<dbReference type="PeptideAtlas" id="Q09660"/>
<dbReference type="EnsemblMetazoa" id="ZK177.5.1">
    <property type="protein sequence ID" value="ZK177.5.1"/>
    <property type="gene ID" value="WBGene00000375"/>
</dbReference>
<dbReference type="GeneID" id="173936"/>
<dbReference type="KEGG" id="cel:CELE_ZK177.5"/>
<dbReference type="UCSC" id="ZK177.5.1">
    <property type="organism name" value="c. elegans"/>
</dbReference>
<dbReference type="AGR" id="WB:WBGene00000375"/>
<dbReference type="CTD" id="173936"/>
<dbReference type="WormBase" id="ZK177.5">
    <property type="protein sequence ID" value="CE25682"/>
    <property type="gene ID" value="WBGene00000375"/>
    <property type="gene designation" value="cyp-44A1"/>
</dbReference>
<dbReference type="eggNOG" id="KOG0159">
    <property type="taxonomic scope" value="Eukaryota"/>
</dbReference>
<dbReference type="HOGENOM" id="CLU_001570_28_0_1"/>
<dbReference type="InParanoid" id="Q09660"/>
<dbReference type="OMA" id="HGTRMCA"/>
<dbReference type="OrthoDB" id="3945418at2759"/>
<dbReference type="PhylomeDB" id="Q09660"/>
<dbReference type="PRO" id="PR:Q09660"/>
<dbReference type="Proteomes" id="UP000001940">
    <property type="component" value="Chromosome II"/>
</dbReference>
<dbReference type="Bgee" id="WBGene00000375">
    <property type="expression patterns" value="Expressed in germ line (C elegans) and 4 other cell types or tissues"/>
</dbReference>
<dbReference type="GO" id="GO:0020037">
    <property type="term" value="F:heme binding"/>
    <property type="evidence" value="ECO:0007669"/>
    <property type="project" value="InterPro"/>
</dbReference>
<dbReference type="GO" id="GO:0005506">
    <property type="term" value="F:iron ion binding"/>
    <property type="evidence" value="ECO:0007669"/>
    <property type="project" value="InterPro"/>
</dbReference>
<dbReference type="GO" id="GO:0004497">
    <property type="term" value="F:monooxygenase activity"/>
    <property type="evidence" value="ECO:0007669"/>
    <property type="project" value="UniProtKB-KW"/>
</dbReference>
<dbReference type="GO" id="GO:0016705">
    <property type="term" value="F:oxidoreductase activity, acting on paired donors, with incorporation or reduction of molecular oxygen"/>
    <property type="evidence" value="ECO:0007669"/>
    <property type="project" value="InterPro"/>
</dbReference>
<dbReference type="CDD" id="cd11054">
    <property type="entry name" value="CYP24A1-like"/>
    <property type="match status" value="1"/>
</dbReference>
<dbReference type="Gene3D" id="1.10.630.10">
    <property type="entry name" value="Cytochrome P450"/>
    <property type="match status" value="1"/>
</dbReference>
<dbReference type="InterPro" id="IPR050479">
    <property type="entry name" value="CYP11_CYP27_families"/>
</dbReference>
<dbReference type="InterPro" id="IPR001128">
    <property type="entry name" value="Cyt_P450"/>
</dbReference>
<dbReference type="InterPro" id="IPR017972">
    <property type="entry name" value="Cyt_P450_CS"/>
</dbReference>
<dbReference type="InterPro" id="IPR002401">
    <property type="entry name" value="Cyt_P450_E_grp-I"/>
</dbReference>
<dbReference type="InterPro" id="IPR036396">
    <property type="entry name" value="Cyt_P450_sf"/>
</dbReference>
<dbReference type="PANTHER" id="PTHR24279">
    <property type="entry name" value="CYTOCHROME P450"/>
    <property type="match status" value="1"/>
</dbReference>
<dbReference type="PANTHER" id="PTHR24279:SF120">
    <property type="entry name" value="CYTOCHROME P450"/>
    <property type="match status" value="1"/>
</dbReference>
<dbReference type="Pfam" id="PF00067">
    <property type="entry name" value="p450"/>
    <property type="match status" value="1"/>
</dbReference>
<dbReference type="PRINTS" id="PR00463">
    <property type="entry name" value="EP450I"/>
</dbReference>
<dbReference type="PRINTS" id="PR00385">
    <property type="entry name" value="P450"/>
</dbReference>
<dbReference type="SUPFAM" id="SSF48264">
    <property type="entry name" value="Cytochrome P450"/>
    <property type="match status" value="1"/>
</dbReference>
<dbReference type="PROSITE" id="PS00086">
    <property type="entry name" value="CYTOCHROME_P450"/>
    <property type="match status" value="1"/>
</dbReference>
<reference key="1">
    <citation type="journal article" date="1998" name="Science">
        <title>Genome sequence of the nematode C. elegans: a platform for investigating biology.</title>
        <authorList>
            <consortium name="The C. elegans sequencing consortium"/>
        </authorList>
    </citation>
    <scope>NUCLEOTIDE SEQUENCE [LARGE SCALE GENOMIC DNA]</scope>
    <source>
        <strain>Bristol N2</strain>
    </source>
</reference>
<organism>
    <name type="scientific">Caenorhabditis elegans</name>
    <dbReference type="NCBI Taxonomy" id="6239"/>
    <lineage>
        <taxon>Eukaryota</taxon>
        <taxon>Metazoa</taxon>
        <taxon>Ecdysozoa</taxon>
        <taxon>Nematoda</taxon>
        <taxon>Chromadorea</taxon>
        <taxon>Rhabditida</taxon>
        <taxon>Rhabditina</taxon>
        <taxon>Rhabditomorpha</taxon>
        <taxon>Rhabditoidea</taxon>
        <taxon>Rhabditidae</taxon>
        <taxon>Peloderinae</taxon>
        <taxon>Caenorhabditis</taxon>
    </lineage>
</organism>
<keyword id="KW-0349">Heme</keyword>
<keyword id="KW-0408">Iron</keyword>
<keyword id="KW-0479">Metal-binding</keyword>
<keyword id="KW-0503">Monooxygenase</keyword>
<keyword id="KW-0560">Oxidoreductase</keyword>
<keyword id="KW-1185">Reference proteome</keyword>
<evidence type="ECO:0000250" key="1"/>
<evidence type="ECO:0000256" key="2">
    <source>
        <dbReference type="SAM" id="MobiDB-lite"/>
    </source>
</evidence>
<evidence type="ECO:0000305" key="3"/>
<protein>
    <recommendedName>
        <fullName>Probable cytochrome P450 CYP44</fullName>
        <ecNumber>1.14.-.-</ecNumber>
    </recommendedName>
</protein>
<sequence>MRRSIRNLAENVEKCPYSPTSSPNTPPRTFSEIPGPREIPVIGNIGYFKYAVKSDAKTIENYNQHLEEMYKKYGKIVKENLGFGRKYVVHIFDPADVQTVLAADGKTPFIVPLQETTQKYREMKGMNPGLGNLNGPEWYRLRSSVQHAMMRPQSVQTYLPFSQIVSNDLVCHVADQQKRFGLVDMQKVAGRWSLESAGQILFEKSLGSLGNRSEWADGLIELNKKIFQLSAKMRLGLPIFRLFSTPSWRKMVDLEDQFYSEVDRLMDDALDKLKVNDSDSKDMRFASYLINRKELNRRDVKVILLSMFSDGLSTTAPMLIYNLYNLATHPEALKEIQKEIKEDPASSKLTFLRACIKETFRMFPIGTEVSRVTQKNLILSGYEVPAGTAVDINTNVLMRHEVLFSDSPREFKPQRWLEKSKEVHPFAYLPFGFGPRMCAGRRFAEQDLLTSLAKLCGNYDIRHRGDPITQIYETLLLPRGDCTFEFKKL</sequence>
<accession>Q09660</accession>
<gene>
    <name type="primary">cyp-44A1</name>
    <name type="synonym">ccp-44</name>
    <name type="synonym">cyp44</name>
    <name type="ORF">ZK177.5</name>
</gene>
<feature type="chain" id="PRO_0000052271" description="Probable cytochrome P450 CYP44">
    <location>
        <begin position="1"/>
        <end position="489"/>
    </location>
</feature>
<feature type="region of interest" description="Disordered" evidence="2">
    <location>
        <begin position="12"/>
        <end position="31"/>
    </location>
</feature>
<feature type="compositionally biased region" description="Low complexity" evidence="2">
    <location>
        <begin position="16"/>
        <end position="29"/>
    </location>
</feature>
<feature type="binding site" description="axial binding residue" evidence="1">
    <location>
        <position position="438"/>
    </location>
    <ligand>
        <name>heme</name>
        <dbReference type="ChEBI" id="CHEBI:30413"/>
    </ligand>
    <ligandPart>
        <name>Fe</name>
        <dbReference type="ChEBI" id="CHEBI:18248"/>
    </ligandPart>
</feature>
<name>CC44_CAEEL</name>
<proteinExistence type="inferred from homology"/>